<protein>
    <recommendedName>
        <fullName evidence="1">GMP synthase [glutamine-hydrolyzing]</fullName>
        <ecNumber evidence="1">6.3.5.2</ecNumber>
    </recommendedName>
    <alternativeName>
        <fullName evidence="1">GMP synthetase</fullName>
    </alternativeName>
    <alternativeName>
        <fullName evidence="1">Glutamine amidotransferase</fullName>
    </alternativeName>
</protein>
<name>GUAA_RHIJ3</name>
<dbReference type="EC" id="6.3.5.2" evidence="1"/>
<dbReference type="EMBL" id="AM236080">
    <property type="protein sequence ID" value="CAK05805.1"/>
    <property type="molecule type" value="Genomic_DNA"/>
</dbReference>
<dbReference type="RefSeq" id="WP_011650119.1">
    <property type="nucleotide sequence ID" value="NC_008380.1"/>
</dbReference>
<dbReference type="SMR" id="Q1MMJ7"/>
<dbReference type="MEROPS" id="C26.957"/>
<dbReference type="EnsemblBacteria" id="CAK05805">
    <property type="protein sequence ID" value="CAK05805"/>
    <property type="gene ID" value="RL0315"/>
</dbReference>
<dbReference type="KEGG" id="rle:RL0315"/>
<dbReference type="eggNOG" id="COG0518">
    <property type="taxonomic scope" value="Bacteria"/>
</dbReference>
<dbReference type="eggNOG" id="COG0519">
    <property type="taxonomic scope" value="Bacteria"/>
</dbReference>
<dbReference type="HOGENOM" id="CLU_014340_0_5_5"/>
<dbReference type="UniPathway" id="UPA00189">
    <property type="reaction ID" value="UER00296"/>
</dbReference>
<dbReference type="Proteomes" id="UP000006575">
    <property type="component" value="Chromosome"/>
</dbReference>
<dbReference type="GO" id="GO:0005829">
    <property type="term" value="C:cytosol"/>
    <property type="evidence" value="ECO:0007669"/>
    <property type="project" value="TreeGrafter"/>
</dbReference>
<dbReference type="GO" id="GO:0005524">
    <property type="term" value="F:ATP binding"/>
    <property type="evidence" value="ECO:0007669"/>
    <property type="project" value="UniProtKB-UniRule"/>
</dbReference>
<dbReference type="GO" id="GO:0003921">
    <property type="term" value="F:GMP synthase activity"/>
    <property type="evidence" value="ECO:0007669"/>
    <property type="project" value="InterPro"/>
</dbReference>
<dbReference type="CDD" id="cd01742">
    <property type="entry name" value="GATase1_GMP_Synthase"/>
    <property type="match status" value="1"/>
</dbReference>
<dbReference type="CDD" id="cd01997">
    <property type="entry name" value="GMP_synthase_C"/>
    <property type="match status" value="1"/>
</dbReference>
<dbReference type="FunFam" id="3.30.300.10:FF:000002">
    <property type="entry name" value="GMP synthase [glutamine-hydrolyzing]"/>
    <property type="match status" value="1"/>
</dbReference>
<dbReference type="FunFam" id="3.40.50.620:FF:000001">
    <property type="entry name" value="GMP synthase [glutamine-hydrolyzing]"/>
    <property type="match status" value="1"/>
</dbReference>
<dbReference type="FunFam" id="3.40.50.880:FF:000001">
    <property type="entry name" value="GMP synthase [glutamine-hydrolyzing]"/>
    <property type="match status" value="1"/>
</dbReference>
<dbReference type="Gene3D" id="3.30.300.10">
    <property type="match status" value="1"/>
</dbReference>
<dbReference type="Gene3D" id="3.40.50.880">
    <property type="match status" value="1"/>
</dbReference>
<dbReference type="Gene3D" id="3.40.50.620">
    <property type="entry name" value="HUPs"/>
    <property type="match status" value="1"/>
</dbReference>
<dbReference type="HAMAP" id="MF_00344">
    <property type="entry name" value="GMP_synthase"/>
    <property type="match status" value="1"/>
</dbReference>
<dbReference type="InterPro" id="IPR029062">
    <property type="entry name" value="Class_I_gatase-like"/>
</dbReference>
<dbReference type="InterPro" id="IPR017926">
    <property type="entry name" value="GATASE"/>
</dbReference>
<dbReference type="InterPro" id="IPR001674">
    <property type="entry name" value="GMP_synth_C"/>
</dbReference>
<dbReference type="InterPro" id="IPR004739">
    <property type="entry name" value="GMP_synth_GATase"/>
</dbReference>
<dbReference type="InterPro" id="IPR022955">
    <property type="entry name" value="GMP_synthase"/>
</dbReference>
<dbReference type="InterPro" id="IPR025777">
    <property type="entry name" value="GMPS_ATP_PPase_dom"/>
</dbReference>
<dbReference type="InterPro" id="IPR014729">
    <property type="entry name" value="Rossmann-like_a/b/a_fold"/>
</dbReference>
<dbReference type="NCBIfam" id="TIGR00884">
    <property type="entry name" value="guaA_Cterm"/>
    <property type="match status" value="1"/>
</dbReference>
<dbReference type="NCBIfam" id="TIGR00888">
    <property type="entry name" value="guaA_Nterm"/>
    <property type="match status" value="1"/>
</dbReference>
<dbReference type="NCBIfam" id="NF000848">
    <property type="entry name" value="PRK00074.1"/>
    <property type="match status" value="1"/>
</dbReference>
<dbReference type="PANTHER" id="PTHR11922:SF2">
    <property type="entry name" value="GMP SYNTHASE [GLUTAMINE-HYDROLYZING]"/>
    <property type="match status" value="1"/>
</dbReference>
<dbReference type="PANTHER" id="PTHR11922">
    <property type="entry name" value="GMP SYNTHASE-RELATED"/>
    <property type="match status" value="1"/>
</dbReference>
<dbReference type="Pfam" id="PF00117">
    <property type="entry name" value="GATase"/>
    <property type="match status" value="1"/>
</dbReference>
<dbReference type="Pfam" id="PF00958">
    <property type="entry name" value="GMP_synt_C"/>
    <property type="match status" value="1"/>
</dbReference>
<dbReference type="Pfam" id="PF03054">
    <property type="entry name" value="tRNA_Me_trans"/>
    <property type="match status" value="1"/>
</dbReference>
<dbReference type="PRINTS" id="PR00097">
    <property type="entry name" value="ANTSNTHASEII"/>
</dbReference>
<dbReference type="PRINTS" id="PR00096">
    <property type="entry name" value="GATASE"/>
</dbReference>
<dbReference type="SUPFAM" id="SSF52402">
    <property type="entry name" value="Adenine nucleotide alpha hydrolases-like"/>
    <property type="match status" value="1"/>
</dbReference>
<dbReference type="SUPFAM" id="SSF52317">
    <property type="entry name" value="Class I glutamine amidotransferase-like"/>
    <property type="match status" value="1"/>
</dbReference>
<dbReference type="SUPFAM" id="SSF54810">
    <property type="entry name" value="GMP synthetase C-terminal dimerisation domain"/>
    <property type="match status" value="1"/>
</dbReference>
<dbReference type="PROSITE" id="PS51273">
    <property type="entry name" value="GATASE_TYPE_1"/>
    <property type="match status" value="1"/>
</dbReference>
<dbReference type="PROSITE" id="PS51553">
    <property type="entry name" value="GMPS_ATP_PPASE"/>
    <property type="match status" value="1"/>
</dbReference>
<organism>
    <name type="scientific">Rhizobium johnstonii (strain DSM 114642 / LMG 32736 / 3841)</name>
    <name type="common">Rhizobium leguminosarum bv. viciae</name>
    <dbReference type="NCBI Taxonomy" id="216596"/>
    <lineage>
        <taxon>Bacteria</taxon>
        <taxon>Pseudomonadati</taxon>
        <taxon>Pseudomonadota</taxon>
        <taxon>Alphaproteobacteria</taxon>
        <taxon>Hyphomicrobiales</taxon>
        <taxon>Rhizobiaceae</taxon>
        <taxon>Rhizobium/Agrobacterium group</taxon>
        <taxon>Rhizobium</taxon>
        <taxon>Rhizobium johnstonii</taxon>
    </lineage>
</organism>
<proteinExistence type="inferred from homology"/>
<comment type="function">
    <text evidence="1">Catalyzes the synthesis of GMP from XMP.</text>
</comment>
<comment type="catalytic activity">
    <reaction evidence="1">
        <text>XMP + L-glutamine + ATP + H2O = GMP + L-glutamate + AMP + diphosphate + 2 H(+)</text>
        <dbReference type="Rhea" id="RHEA:11680"/>
        <dbReference type="ChEBI" id="CHEBI:15377"/>
        <dbReference type="ChEBI" id="CHEBI:15378"/>
        <dbReference type="ChEBI" id="CHEBI:29985"/>
        <dbReference type="ChEBI" id="CHEBI:30616"/>
        <dbReference type="ChEBI" id="CHEBI:33019"/>
        <dbReference type="ChEBI" id="CHEBI:57464"/>
        <dbReference type="ChEBI" id="CHEBI:58115"/>
        <dbReference type="ChEBI" id="CHEBI:58359"/>
        <dbReference type="ChEBI" id="CHEBI:456215"/>
        <dbReference type="EC" id="6.3.5.2"/>
    </reaction>
</comment>
<comment type="pathway">
    <text evidence="1">Purine metabolism; GMP biosynthesis; GMP from XMP (L-Gln route): step 1/1.</text>
</comment>
<comment type="subunit">
    <text evidence="1">Homodimer.</text>
</comment>
<keyword id="KW-0067">ATP-binding</keyword>
<keyword id="KW-0315">Glutamine amidotransferase</keyword>
<keyword id="KW-0332">GMP biosynthesis</keyword>
<keyword id="KW-0436">Ligase</keyword>
<keyword id="KW-0547">Nucleotide-binding</keyword>
<keyword id="KW-0658">Purine biosynthesis</keyword>
<feature type="chain" id="PRO_1000120378" description="GMP synthase [glutamine-hydrolyzing]">
    <location>
        <begin position="1"/>
        <end position="520"/>
    </location>
</feature>
<feature type="domain" description="Glutamine amidotransferase type-1" evidence="1">
    <location>
        <begin position="9"/>
        <end position="202"/>
    </location>
</feature>
<feature type="domain" description="GMPS ATP-PPase" evidence="1">
    <location>
        <begin position="203"/>
        <end position="395"/>
    </location>
</feature>
<feature type="active site" description="Nucleophile" evidence="1">
    <location>
        <position position="86"/>
    </location>
</feature>
<feature type="active site" evidence="1">
    <location>
        <position position="176"/>
    </location>
</feature>
<feature type="active site" evidence="1">
    <location>
        <position position="178"/>
    </location>
</feature>
<feature type="binding site" evidence="1">
    <location>
        <begin position="230"/>
        <end position="236"/>
    </location>
    <ligand>
        <name>ATP</name>
        <dbReference type="ChEBI" id="CHEBI:30616"/>
    </ligand>
</feature>
<sequence length="520" mass="57313">MTQTAHPDSVLIVDFGSQVTQLIARRVREAGVYCEIVPFQSAEEGFHRLQPKAVILSGSPASTVDEGSPRAPDIIFDSGLPVFGICYGQQTMCMQLGGKVESGHHREFGRAFLEVDRDCQLFEGLWSSGSRHQVWMSHGDRVTALPDGFEVVATSSNAPYAFIADEKRKYYGVQFHPEVVHTPDGAKLIGNFIHNIAGIKGDWSMSAYRQKAVEQIRAQVGDKRVICALSGGVDSSVAALLIHEAVGDQLTCILVDHGLMRKDEAAGVVAMFREHYNLHLLHVDAADRFIGELEGVSDPETKRKIIGRLFIETFEEEARKLGGADFLGQGTLYPDVIESVSFTGGPSVTIKSHHNVGGLPERMKMQLVEPLRELFKDEVRALGRELGLPDSFIGRHPFPGPGLAIRCPGGITREKLEILREADAIYLDEIRKAGLYDAIWQAFAVLLPVQTVGVMGDGRTYEFVCALRAVTSVDGMTADFYHYDMEFLGRAATRIINEVRGINRVVYDVTSKPPGTIEWE</sequence>
<reference key="1">
    <citation type="journal article" date="2006" name="Genome Biol.">
        <title>The genome of Rhizobium leguminosarum has recognizable core and accessory components.</title>
        <authorList>
            <person name="Young J.P.W."/>
            <person name="Crossman L.C."/>
            <person name="Johnston A.W.B."/>
            <person name="Thomson N.R."/>
            <person name="Ghazoui Z.F."/>
            <person name="Hull K.H."/>
            <person name="Wexler M."/>
            <person name="Curson A.R.J."/>
            <person name="Todd J.D."/>
            <person name="Poole P.S."/>
            <person name="Mauchline T.H."/>
            <person name="East A.K."/>
            <person name="Quail M.A."/>
            <person name="Churcher C."/>
            <person name="Arrowsmith C."/>
            <person name="Cherevach I."/>
            <person name="Chillingworth T."/>
            <person name="Clarke K."/>
            <person name="Cronin A."/>
            <person name="Davis P."/>
            <person name="Fraser A."/>
            <person name="Hance Z."/>
            <person name="Hauser H."/>
            <person name="Jagels K."/>
            <person name="Moule S."/>
            <person name="Mungall K."/>
            <person name="Norbertczak H."/>
            <person name="Rabbinowitsch E."/>
            <person name="Sanders M."/>
            <person name="Simmonds M."/>
            <person name="Whitehead S."/>
            <person name="Parkhill J."/>
        </authorList>
    </citation>
    <scope>NUCLEOTIDE SEQUENCE [LARGE SCALE GENOMIC DNA]</scope>
    <source>
        <strain>DSM 114642 / LMG 32736 / 3841</strain>
    </source>
</reference>
<gene>
    <name evidence="1" type="primary">guaA</name>
    <name type="ordered locus">RL0315</name>
</gene>
<accession>Q1MMJ7</accession>
<evidence type="ECO:0000255" key="1">
    <source>
        <dbReference type="HAMAP-Rule" id="MF_00344"/>
    </source>
</evidence>